<feature type="chain" id="PRO_1000196387" description="Small ribosomal subunit protein bS16">
    <location>
        <begin position="1"/>
        <end position="92"/>
    </location>
</feature>
<protein>
    <recommendedName>
        <fullName evidence="1">Small ribosomal subunit protein bS16</fullName>
    </recommendedName>
    <alternativeName>
        <fullName evidence="2">30S ribosomal protein S16</fullName>
    </alternativeName>
</protein>
<accession>B1I2P9</accession>
<evidence type="ECO:0000255" key="1">
    <source>
        <dbReference type="HAMAP-Rule" id="MF_00385"/>
    </source>
</evidence>
<evidence type="ECO:0000305" key="2"/>
<proteinExistence type="inferred from homology"/>
<reference key="1">
    <citation type="submission" date="2007-10" db="EMBL/GenBank/DDBJ databases">
        <title>Complete sequence of chromosome of Desulforudis audaxviator MP104C.</title>
        <authorList>
            <person name="Copeland A."/>
            <person name="Lucas S."/>
            <person name="Lapidus A."/>
            <person name="Barry K."/>
            <person name="Glavina del Rio T."/>
            <person name="Dalin E."/>
            <person name="Tice H."/>
            <person name="Bruce D."/>
            <person name="Pitluck S."/>
            <person name="Lowry S.R."/>
            <person name="Larimer F."/>
            <person name="Land M.L."/>
            <person name="Hauser L."/>
            <person name="Kyrpides N."/>
            <person name="Ivanova N.N."/>
            <person name="Richardson P."/>
        </authorList>
    </citation>
    <scope>NUCLEOTIDE SEQUENCE [LARGE SCALE GENOMIC DNA]</scope>
    <source>
        <strain>MP104C</strain>
    </source>
</reference>
<sequence length="92" mass="10582">MAVKIRLKRMGAKRDPFYRIVVSDARSPRDGRFIEQIGYYDPLEEPARISVDEAKARVWLQQGAQMTETVRSLFKKSGVLERLGAERAEERG</sequence>
<name>RS16_DESAP</name>
<comment type="similarity">
    <text evidence="1">Belongs to the bacterial ribosomal protein bS16 family.</text>
</comment>
<dbReference type="EMBL" id="CP000860">
    <property type="protein sequence ID" value="ACA59190.1"/>
    <property type="molecule type" value="Genomic_DNA"/>
</dbReference>
<dbReference type="RefSeq" id="WP_012301778.1">
    <property type="nucleotide sequence ID" value="NC_010424.1"/>
</dbReference>
<dbReference type="SMR" id="B1I2P9"/>
<dbReference type="STRING" id="477974.Daud_0656"/>
<dbReference type="KEGG" id="dau:Daud_0656"/>
<dbReference type="eggNOG" id="COG0228">
    <property type="taxonomic scope" value="Bacteria"/>
</dbReference>
<dbReference type="HOGENOM" id="CLU_100590_5_0_9"/>
<dbReference type="OrthoDB" id="9807878at2"/>
<dbReference type="Proteomes" id="UP000008544">
    <property type="component" value="Chromosome"/>
</dbReference>
<dbReference type="GO" id="GO:0005737">
    <property type="term" value="C:cytoplasm"/>
    <property type="evidence" value="ECO:0007669"/>
    <property type="project" value="UniProtKB-ARBA"/>
</dbReference>
<dbReference type="GO" id="GO:0015935">
    <property type="term" value="C:small ribosomal subunit"/>
    <property type="evidence" value="ECO:0007669"/>
    <property type="project" value="TreeGrafter"/>
</dbReference>
<dbReference type="GO" id="GO:0003735">
    <property type="term" value="F:structural constituent of ribosome"/>
    <property type="evidence" value="ECO:0007669"/>
    <property type="project" value="InterPro"/>
</dbReference>
<dbReference type="GO" id="GO:0006412">
    <property type="term" value="P:translation"/>
    <property type="evidence" value="ECO:0007669"/>
    <property type="project" value="UniProtKB-UniRule"/>
</dbReference>
<dbReference type="Gene3D" id="3.30.1320.10">
    <property type="match status" value="1"/>
</dbReference>
<dbReference type="HAMAP" id="MF_00385">
    <property type="entry name" value="Ribosomal_bS16"/>
    <property type="match status" value="1"/>
</dbReference>
<dbReference type="InterPro" id="IPR000307">
    <property type="entry name" value="Ribosomal_bS16"/>
</dbReference>
<dbReference type="InterPro" id="IPR020592">
    <property type="entry name" value="Ribosomal_bS16_CS"/>
</dbReference>
<dbReference type="InterPro" id="IPR023803">
    <property type="entry name" value="Ribosomal_bS16_dom_sf"/>
</dbReference>
<dbReference type="NCBIfam" id="TIGR00002">
    <property type="entry name" value="S16"/>
    <property type="match status" value="1"/>
</dbReference>
<dbReference type="PANTHER" id="PTHR12919">
    <property type="entry name" value="30S RIBOSOMAL PROTEIN S16"/>
    <property type="match status" value="1"/>
</dbReference>
<dbReference type="PANTHER" id="PTHR12919:SF20">
    <property type="entry name" value="SMALL RIBOSOMAL SUBUNIT PROTEIN BS16M"/>
    <property type="match status" value="1"/>
</dbReference>
<dbReference type="Pfam" id="PF00886">
    <property type="entry name" value="Ribosomal_S16"/>
    <property type="match status" value="1"/>
</dbReference>
<dbReference type="SUPFAM" id="SSF54565">
    <property type="entry name" value="Ribosomal protein S16"/>
    <property type="match status" value="1"/>
</dbReference>
<dbReference type="PROSITE" id="PS00732">
    <property type="entry name" value="RIBOSOMAL_S16"/>
    <property type="match status" value="1"/>
</dbReference>
<keyword id="KW-1185">Reference proteome</keyword>
<keyword id="KW-0687">Ribonucleoprotein</keyword>
<keyword id="KW-0689">Ribosomal protein</keyword>
<organism>
    <name type="scientific">Desulforudis audaxviator (strain MP104C)</name>
    <dbReference type="NCBI Taxonomy" id="477974"/>
    <lineage>
        <taxon>Bacteria</taxon>
        <taxon>Bacillati</taxon>
        <taxon>Bacillota</taxon>
        <taxon>Clostridia</taxon>
        <taxon>Thermoanaerobacterales</taxon>
        <taxon>Candidatus Desulforudaceae</taxon>
        <taxon>Candidatus Desulforudis</taxon>
    </lineage>
</organism>
<gene>
    <name evidence="1" type="primary">rpsP</name>
    <name type="ordered locus">Daud_0656</name>
</gene>